<comment type="function">
    <text evidence="1">Catalyzes the hydrolysis of the adenine ring of phosphoribosyl-AMP.</text>
</comment>
<comment type="catalytic activity">
    <reaction evidence="1">
        <text>1-(5-phospho-beta-D-ribosyl)-5'-AMP + H2O = 1-(5-phospho-beta-D-ribosyl)-5-[(5-phospho-beta-D-ribosylamino)methylideneamino]imidazole-4-carboxamide</text>
        <dbReference type="Rhea" id="RHEA:20049"/>
        <dbReference type="ChEBI" id="CHEBI:15377"/>
        <dbReference type="ChEBI" id="CHEBI:58435"/>
        <dbReference type="ChEBI" id="CHEBI:59457"/>
        <dbReference type="EC" id="3.5.4.19"/>
    </reaction>
</comment>
<comment type="cofactor">
    <cofactor evidence="1">
        <name>Mg(2+)</name>
        <dbReference type="ChEBI" id="CHEBI:18420"/>
    </cofactor>
    <text evidence="1">Binds 1 Mg(2+) ion per subunit.</text>
</comment>
<comment type="cofactor">
    <cofactor evidence="1">
        <name>Zn(2+)</name>
        <dbReference type="ChEBI" id="CHEBI:29105"/>
    </cofactor>
    <text evidence="1">Binds 1 zinc ion per subunit.</text>
</comment>
<comment type="pathway">
    <text evidence="1">Amino-acid biosynthesis; L-histidine biosynthesis; L-histidine from 5-phospho-alpha-D-ribose 1-diphosphate: step 3/9.</text>
</comment>
<comment type="subunit">
    <text evidence="1">Homodimer.</text>
</comment>
<comment type="subcellular location">
    <subcellularLocation>
        <location evidence="1">Cytoplasm</location>
    </subcellularLocation>
</comment>
<comment type="similarity">
    <text evidence="1">Belongs to the PRA-CH family.</text>
</comment>
<evidence type="ECO:0000255" key="1">
    <source>
        <dbReference type="HAMAP-Rule" id="MF_01021"/>
    </source>
</evidence>
<accession>P60542</accession>
<gene>
    <name evidence="1" type="primary">hisI</name>
    <name type="ordered locus">GSU1531</name>
</gene>
<protein>
    <recommendedName>
        <fullName evidence="1">Phosphoribosyl-AMP cyclohydrolase</fullName>
        <shortName evidence="1">PRA-CH</shortName>
        <ecNumber evidence="1">3.5.4.19</ecNumber>
    </recommendedName>
</protein>
<organism>
    <name type="scientific">Geobacter sulfurreducens (strain ATCC 51573 / DSM 12127 / PCA)</name>
    <dbReference type="NCBI Taxonomy" id="243231"/>
    <lineage>
        <taxon>Bacteria</taxon>
        <taxon>Pseudomonadati</taxon>
        <taxon>Thermodesulfobacteriota</taxon>
        <taxon>Desulfuromonadia</taxon>
        <taxon>Geobacterales</taxon>
        <taxon>Geobacteraceae</taxon>
        <taxon>Geobacter</taxon>
    </lineage>
</organism>
<sequence length="125" mass="14263">MITIDFQKMGGLIPAIIQDHATNEVLMVAFMDEKTLNLTLESGKTWFFSRSRNKYWMKGEESGNTQEVVEVLTDCDADAVVIKVKQNGPAACHTGNRSCFYVRWEDGQWVEHSEPLFDPAEVYKK</sequence>
<name>HIS3_GEOSL</name>
<feature type="chain" id="PRO_0000136477" description="Phosphoribosyl-AMP cyclohydrolase">
    <location>
        <begin position="1"/>
        <end position="125"/>
    </location>
</feature>
<feature type="binding site" evidence="1">
    <location>
        <position position="74"/>
    </location>
    <ligand>
        <name>Mg(2+)</name>
        <dbReference type="ChEBI" id="CHEBI:18420"/>
    </ligand>
</feature>
<feature type="binding site" evidence="1">
    <location>
        <position position="75"/>
    </location>
    <ligand>
        <name>Zn(2+)</name>
        <dbReference type="ChEBI" id="CHEBI:29105"/>
        <note>ligand shared between dimeric partners</note>
    </ligand>
</feature>
<feature type="binding site" evidence="1">
    <location>
        <position position="76"/>
    </location>
    <ligand>
        <name>Mg(2+)</name>
        <dbReference type="ChEBI" id="CHEBI:18420"/>
    </ligand>
</feature>
<feature type="binding site" evidence="1">
    <location>
        <position position="78"/>
    </location>
    <ligand>
        <name>Mg(2+)</name>
        <dbReference type="ChEBI" id="CHEBI:18420"/>
    </ligand>
</feature>
<feature type="binding site" evidence="1">
    <location>
        <position position="92"/>
    </location>
    <ligand>
        <name>Zn(2+)</name>
        <dbReference type="ChEBI" id="CHEBI:29105"/>
        <note>ligand shared between dimeric partners</note>
    </ligand>
</feature>
<feature type="binding site" evidence="1">
    <location>
        <position position="99"/>
    </location>
    <ligand>
        <name>Zn(2+)</name>
        <dbReference type="ChEBI" id="CHEBI:29105"/>
        <note>ligand shared between dimeric partners</note>
    </ligand>
</feature>
<keyword id="KW-0028">Amino-acid biosynthesis</keyword>
<keyword id="KW-0963">Cytoplasm</keyword>
<keyword id="KW-0368">Histidine biosynthesis</keyword>
<keyword id="KW-0378">Hydrolase</keyword>
<keyword id="KW-0460">Magnesium</keyword>
<keyword id="KW-0479">Metal-binding</keyword>
<keyword id="KW-1185">Reference proteome</keyword>
<keyword id="KW-0862">Zinc</keyword>
<proteinExistence type="inferred from homology"/>
<dbReference type="EC" id="3.5.4.19" evidence="1"/>
<dbReference type="EMBL" id="AE017180">
    <property type="protein sequence ID" value="AAR34905.1"/>
    <property type="molecule type" value="Genomic_DNA"/>
</dbReference>
<dbReference type="RefSeq" id="NP_952582.1">
    <property type="nucleotide sequence ID" value="NC_002939.5"/>
</dbReference>
<dbReference type="RefSeq" id="WP_010942178.1">
    <property type="nucleotide sequence ID" value="NC_002939.5"/>
</dbReference>
<dbReference type="SMR" id="P60542"/>
<dbReference type="STRING" id="243231.GSU1531"/>
<dbReference type="EnsemblBacteria" id="AAR34905">
    <property type="protein sequence ID" value="AAR34905"/>
    <property type="gene ID" value="GSU1531"/>
</dbReference>
<dbReference type="KEGG" id="gsu:GSU1531"/>
<dbReference type="PATRIC" id="fig|243231.5.peg.1574"/>
<dbReference type="eggNOG" id="COG0139">
    <property type="taxonomic scope" value="Bacteria"/>
</dbReference>
<dbReference type="HOGENOM" id="CLU_048577_5_0_7"/>
<dbReference type="InParanoid" id="P60542"/>
<dbReference type="OrthoDB" id="9795769at2"/>
<dbReference type="UniPathway" id="UPA00031">
    <property type="reaction ID" value="UER00008"/>
</dbReference>
<dbReference type="Proteomes" id="UP000000577">
    <property type="component" value="Chromosome"/>
</dbReference>
<dbReference type="GO" id="GO:0005737">
    <property type="term" value="C:cytoplasm"/>
    <property type="evidence" value="ECO:0007669"/>
    <property type="project" value="UniProtKB-SubCell"/>
</dbReference>
<dbReference type="GO" id="GO:0000287">
    <property type="term" value="F:magnesium ion binding"/>
    <property type="evidence" value="ECO:0007669"/>
    <property type="project" value="UniProtKB-UniRule"/>
</dbReference>
<dbReference type="GO" id="GO:0004635">
    <property type="term" value="F:phosphoribosyl-AMP cyclohydrolase activity"/>
    <property type="evidence" value="ECO:0007669"/>
    <property type="project" value="UniProtKB-UniRule"/>
</dbReference>
<dbReference type="GO" id="GO:0008270">
    <property type="term" value="F:zinc ion binding"/>
    <property type="evidence" value="ECO:0007669"/>
    <property type="project" value="UniProtKB-UniRule"/>
</dbReference>
<dbReference type="GO" id="GO:0000105">
    <property type="term" value="P:L-histidine biosynthetic process"/>
    <property type="evidence" value="ECO:0007669"/>
    <property type="project" value="UniProtKB-UniRule"/>
</dbReference>
<dbReference type="FunFam" id="3.10.20.810:FF:000001">
    <property type="entry name" value="Histidine biosynthesis bifunctional protein HisIE"/>
    <property type="match status" value="1"/>
</dbReference>
<dbReference type="Gene3D" id="3.10.20.810">
    <property type="entry name" value="Phosphoribosyl-AMP cyclohydrolase"/>
    <property type="match status" value="1"/>
</dbReference>
<dbReference type="HAMAP" id="MF_01021">
    <property type="entry name" value="HisI"/>
    <property type="match status" value="1"/>
</dbReference>
<dbReference type="InterPro" id="IPR026660">
    <property type="entry name" value="PRA-CH"/>
</dbReference>
<dbReference type="InterPro" id="IPR002496">
    <property type="entry name" value="PRib_AMP_CycHydrolase_dom"/>
</dbReference>
<dbReference type="InterPro" id="IPR038019">
    <property type="entry name" value="PRib_AMP_CycHydrolase_sf"/>
</dbReference>
<dbReference type="NCBIfam" id="NF000768">
    <property type="entry name" value="PRK00051.1"/>
    <property type="match status" value="1"/>
</dbReference>
<dbReference type="PANTHER" id="PTHR42945">
    <property type="entry name" value="HISTIDINE BIOSYNTHESIS BIFUNCTIONAL PROTEIN"/>
    <property type="match status" value="1"/>
</dbReference>
<dbReference type="PANTHER" id="PTHR42945:SF1">
    <property type="entry name" value="HISTIDINE BIOSYNTHESIS BIFUNCTIONAL PROTEIN HIS7"/>
    <property type="match status" value="1"/>
</dbReference>
<dbReference type="Pfam" id="PF01502">
    <property type="entry name" value="PRA-CH"/>
    <property type="match status" value="1"/>
</dbReference>
<dbReference type="SUPFAM" id="SSF141734">
    <property type="entry name" value="HisI-like"/>
    <property type="match status" value="1"/>
</dbReference>
<reference key="1">
    <citation type="journal article" date="2003" name="Science">
        <title>Genome of Geobacter sulfurreducens: metal reduction in subsurface environments.</title>
        <authorList>
            <person name="Methe B.A."/>
            <person name="Nelson K.E."/>
            <person name="Eisen J.A."/>
            <person name="Paulsen I.T."/>
            <person name="Nelson W.C."/>
            <person name="Heidelberg J.F."/>
            <person name="Wu D."/>
            <person name="Wu M."/>
            <person name="Ward N.L."/>
            <person name="Beanan M.J."/>
            <person name="Dodson R.J."/>
            <person name="Madupu R."/>
            <person name="Brinkac L.M."/>
            <person name="Daugherty S.C."/>
            <person name="DeBoy R.T."/>
            <person name="Durkin A.S."/>
            <person name="Gwinn M.L."/>
            <person name="Kolonay J.F."/>
            <person name="Sullivan S.A."/>
            <person name="Haft D.H."/>
            <person name="Selengut J."/>
            <person name="Davidsen T.M."/>
            <person name="Zafar N."/>
            <person name="White O."/>
            <person name="Tran B."/>
            <person name="Romero C."/>
            <person name="Forberger H.A."/>
            <person name="Weidman J.F."/>
            <person name="Khouri H.M."/>
            <person name="Feldblyum T.V."/>
            <person name="Utterback T.R."/>
            <person name="Van Aken S.E."/>
            <person name="Lovley D.R."/>
            <person name="Fraser C.M."/>
        </authorList>
    </citation>
    <scope>NUCLEOTIDE SEQUENCE [LARGE SCALE GENOMIC DNA]</scope>
    <source>
        <strain>ATCC 51573 / DSM 12127 / PCA</strain>
    </source>
</reference>